<sequence>MAAITSWITDSGCKDHASLVSIAKLAEQAERYEDMAVAMKTIAEMGNELNNEERNLLSVAYKNVVGARRSSWRIMSSIAKKQAGTPLADQTDIYLKKVEEELTKICNDVLALLSKNLITEKIGAEAKIFYYKMMGDYYRYLAEVQEGEQNDKSTEAAEEAYQKATSLAEAELSVTHPIRLGLALNFSVFYYEIKNMPEKACSLAKAAFDAAITEVDSIKDETYKDSTLIMQLLRDNLTLWSSECETDS</sequence>
<protein>
    <recommendedName>
        <fullName>14-3-3 protein homolog 2</fullName>
    </recommendedName>
</protein>
<evidence type="ECO:0000305" key="1"/>
<organism>
    <name type="scientific">Echinococcus granulosus</name>
    <name type="common">Hydatid tapeworm</name>
    <dbReference type="NCBI Taxonomy" id="6210"/>
    <lineage>
        <taxon>Eukaryota</taxon>
        <taxon>Metazoa</taxon>
        <taxon>Spiralia</taxon>
        <taxon>Lophotrochozoa</taxon>
        <taxon>Platyhelminthes</taxon>
        <taxon>Cestoda</taxon>
        <taxon>Eucestoda</taxon>
        <taxon>Cyclophyllidea</taxon>
        <taxon>Taeniidae</taxon>
        <taxon>Echinococcus</taxon>
        <taxon>Echinococcus granulosus group</taxon>
    </lineage>
</organism>
<comment type="similarity">
    <text evidence="1">Belongs to the 14-3-3 family.</text>
</comment>
<dbReference type="EMBL" id="AF529418">
    <property type="protein sequence ID" value="AAM94863.1"/>
    <property type="molecule type" value="mRNA"/>
</dbReference>
<dbReference type="SMR" id="Q8MUA4"/>
<dbReference type="OrthoDB" id="10260625at2759"/>
<dbReference type="Proteomes" id="UP000492820">
    <property type="component" value="Unplaced"/>
</dbReference>
<dbReference type="CDD" id="cd08774">
    <property type="entry name" value="14-3-3"/>
    <property type="match status" value="1"/>
</dbReference>
<dbReference type="Gene3D" id="1.20.190.20">
    <property type="entry name" value="14-3-3 domain"/>
    <property type="match status" value="1"/>
</dbReference>
<dbReference type="InterPro" id="IPR000308">
    <property type="entry name" value="14-3-3"/>
</dbReference>
<dbReference type="InterPro" id="IPR023409">
    <property type="entry name" value="14-3-3_CS"/>
</dbReference>
<dbReference type="InterPro" id="IPR036815">
    <property type="entry name" value="14-3-3_dom_sf"/>
</dbReference>
<dbReference type="InterPro" id="IPR023410">
    <property type="entry name" value="14-3-3_domain"/>
</dbReference>
<dbReference type="PANTHER" id="PTHR18860">
    <property type="entry name" value="14-3-3 PROTEIN"/>
    <property type="match status" value="1"/>
</dbReference>
<dbReference type="Pfam" id="PF00244">
    <property type="entry name" value="14-3-3"/>
    <property type="match status" value="1"/>
</dbReference>
<dbReference type="PIRSF" id="PIRSF000868">
    <property type="entry name" value="14-3-3"/>
    <property type="match status" value="1"/>
</dbReference>
<dbReference type="PRINTS" id="PR00305">
    <property type="entry name" value="1433ZETA"/>
</dbReference>
<dbReference type="SMART" id="SM00101">
    <property type="entry name" value="14_3_3"/>
    <property type="match status" value="1"/>
</dbReference>
<dbReference type="SUPFAM" id="SSF48445">
    <property type="entry name" value="14-3-3 protein"/>
    <property type="match status" value="1"/>
</dbReference>
<dbReference type="PROSITE" id="PS00796">
    <property type="entry name" value="1433_1"/>
    <property type="match status" value="1"/>
</dbReference>
<dbReference type="PROSITE" id="PS00797">
    <property type="entry name" value="1433_2"/>
    <property type="match status" value="1"/>
</dbReference>
<name>14332_ECHGR</name>
<proteinExistence type="evidence at transcript level"/>
<accession>Q8MUA4</accession>
<feature type="chain" id="PRO_0000058654" description="14-3-3 protein homolog 2">
    <location>
        <begin position="1"/>
        <end position="248"/>
    </location>
</feature>
<reference key="1">
    <citation type="journal article" date="2004" name="Parasitol. Res.">
        <title>14-3-3 gene characterization and description of a second 14-3-3 isoform in both Echinococcus granulosus and E. multilocularis.</title>
        <authorList>
            <person name="Nunes C.P."/>
            <person name="Zaha A."/>
            <person name="Gottstein B."/>
            <person name="Muller N."/>
            <person name="Siles-Lucas M."/>
        </authorList>
    </citation>
    <scope>NUCLEOTIDE SEQUENCE [MRNA]</scope>
</reference>